<dbReference type="EMBL" id="Y08171">
    <property type="protein sequence ID" value="CAA69357.1"/>
    <property type="molecule type" value="mRNA"/>
</dbReference>
<dbReference type="EMBL" id="Z94720">
    <property type="protein sequence ID" value="CAB08115.1"/>
    <property type="molecule type" value="mRNA"/>
</dbReference>
<dbReference type="RefSeq" id="NP_990205.1">
    <property type="nucleotide sequence ID" value="NM_204874.2"/>
</dbReference>
<dbReference type="SMR" id="Q98919"/>
<dbReference type="FunCoup" id="Q98919">
    <property type="interactions" value="114"/>
</dbReference>
<dbReference type="STRING" id="9031.ENSGALP00000063211"/>
<dbReference type="GlyGen" id="Q98919">
    <property type="glycosylation" value="9 sites"/>
</dbReference>
<dbReference type="PaxDb" id="9031-ENSGALP00000024292"/>
<dbReference type="Ensembl" id="ENSGALT00010015350.1">
    <property type="protein sequence ID" value="ENSGALP00010008982.1"/>
    <property type="gene ID" value="ENSGALG00010006446.1"/>
</dbReference>
<dbReference type="GeneID" id="395687"/>
<dbReference type="KEGG" id="gga:395687"/>
<dbReference type="CTD" id="4045"/>
<dbReference type="VEuPathDB" id="HostDB:geneid_395687"/>
<dbReference type="eggNOG" id="KOG3510">
    <property type="taxonomic scope" value="Eukaryota"/>
</dbReference>
<dbReference type="GeneTree" id="ENSGT00940000158516"/>
<dbReference type="HOGENOM" id="CLU_027228_2_3_1"/>
<dbReference type="InParanoid" id="Q98919"/>
<dbReference type="OrthoDB" id="6159398at2759"/>
<dbReference type="Reactome" id="R-GGA-163125">
    <property type="pathway name" value="Post-translational modification: synthesis of GPI-anchored proteins"/>
</dbReference>
<dbReference type="PRO" id="PR:Q98919"/>
<dbReference type="Proteomes" id="UP000000539">
    <property type="component" value="Chromosome 1"/>
</dbReference>
<dbReference type="Bgee" id="ENSGALG00000040620">
    <property type="expression patterns" value="Expressed in cerebellum and 8 other cell types or tissues"/>
</dbReference>
<dbReference type="GO" id="GO:0005886">
    <property type="term" value="C:plasma membrane"/>
    <property type="evidence" value="ECO:0007669"/>
    <property type="project" value="UniProtKB-SubCell"/>
</dbReference>
<dbReference type="GO" id="GO:0098552">
    <property type="term" value="C:side of membrane"/>
    <property type="evidence" value="ECO:0007669"/>
    <property type="project" value="UniProtKB-KW"/>
</dbReference>
<dbReference type="GO" id="GO:0007155">
    <property type="term" value="P:cell adhesion"/>
    <property type="evidence" value="ECO:0007669"/>
    <property type="project" value="UniProtKB-KW"/>
</dbReference>
<dbReference type="FunFam" id="2.60.40.10:FF:000013">
    <property type="entry name" value="cell adhesion molecule 1 isoform X1"/>
    <property type="match status" value="1"/>
</dbReference>
<dbReference type="FunFam" id="2.60.40.10:FF:000500">
    <property type="entry name" value="limbic system-associated membrane protein isoform X1"/>
    <property type="match status" value="1"/>
</dbReference>
<dbReference type="FunFam" id="2.60.40.10:FF:000113">
    <property type="entry name" value="Opioid-binding protein/cell adhesion molecule"/>
    <property type="match status" value="1"/>
</dbReference>
<dbReference type="Gene3D" id="2.60.40.10">
    <property type="entry name" value="Immunoglobulins"/>
    <property type="match status" value="3"/>
</dbReference>
<dbReference type="InterPro" id="IPR007110">
    <property type="entry name" value="Ig-like_dom"/>
</dbReference>
<dbReference type="InterPro" id="IPR036179">
    <property type="entry name" value="Ig-like_dom_sf"/>
</dbReference>
<dbReference type="InterPro" id="IPR013783">
    <property type="entry name" value="Ig-like_fold"/>
</dbReference>
<dbReference type="InterPro" id="IPR013098">
    <property type="entry name" value="Ig_I-set"/>
</dbReference>
<dbReference type="InterPro" id="IPR003599">
    <property type="entry name" value="Ig_sub"/>
</dbReference>
<dbReference type="InterPro" id="IPR003598">
    <property type="entry name" value="Ig_sub2"/>
</dbReference>
<dbReference type="InterPro" id="IPR050876">
    <property type="entry name" value="IgLON_domain"/>
</dbReference>
<dbReference type="PANTHER" id="PTHR42757">
    <property type="entry name" value="IGLON FAMILY OF IMMUNOGLOBULIN SUPERFAMILY-RELATED"/>
    <property type="match status" value="1"/>
</dbReference>
<dbReference type="PANTHER" id="PTHR42757:SF22">
    <property type="entry name" value="LIMBIC SYSTEM-ASSOCIATED MEMBRANE PROTEIN"/>
    <property type="match status" value="1"/>
</dbReference>
<dbReference type="Pfam" id="PF07679">
    <property type="entry name" value="I-set"/>
    <property type="match status" value="1"/>
</dbReference>
<dbReference type="Pfam" id="PF13927">
    <property type="entry name" value="Ig_3"/>
    <property type="match status" value="2"/>
</dbReference>
<dbReference type="SMART" id="SM00409">
    <property type="entry name" value="IG"/>
    <property type="match status" value="3"/>
</dbReference>
<dbReference type="SMART" id="SM00408">
    <property type="entry name" value="IGc2"/>
    <property type="match status" value="3"/>
</dbReference>
<dbReference type="SUPFAM" id="SSF48726">
    <property type="entry name" value="Immunoglobulin"/>
    <property type="match status" value="3"/>
</dbReference>
<dbReference type="PROSITE" id="PS50835">
    <property type="entry name" value="IG_LIKE"/>
    <property type="match status" value="3"/>
</dbReference>
<proteinExistence type="evidence at transcript level"/>
<reference key="1">
    <citation type="journal article" date="1996" name="J. Cell Sci.">
        <title>A family of glycoproteins (GP55), which inhibit neurite outgrowth, are members of the Ig superfamily and are related to OBCAM, neurotrimin, LAMP and CEPU-1.</title>
        <authorList>
            <person name="Wilson D.J.A."/>
            <person name="Kim D.-S."/>
            <person name="Clarke G.A."/>
            <person name="Marshall-Clarke S."/>
            <person name="Moss D.J."/>
        </authorList>
    </citation>
    <scope>NUCLEOTIDE SEQUENCE [MRNA]</scope>
    <source>
        <tissue>Brain</tissue>
    </source>
</reference>
<reference key="2">
    <citation type="journal article" date="1997" name="Eur. J. Neurosci.">
        <title>Cloning and characterization of a neural cell recognition molecule on axons of the retinotectal system and spinal cord.</title>
        <authorList>
            <person name="Brummendorf T."/>
            <person name="Spaltmann F."/>
            <person name="Treubert U."/>
        </authorList>
    </citation>
    <scope>NUCLEOTIDE SEQUENCE [MRNA]</scope>
    <source>
        <tissue>Brain</tissue>
    </source>
</reference>
<evidence type="ECO:0000250" key="1"/>
<evidence type="ECO:0000255" key="2"/>
<evidence type="ECO:0000255" key="3">
    <source>
        <dbReference type="PROSITE-ProRule" id="PRU00114"/>
    </source>
</evidence>
<evidence type="ECO:0000305" key="4"/>
<name>LSAMP_CHICK</name>
<keyword id="KW-0130">Cell adhesion</keyword>
<keyword id="KW-1003">Cell membrane</keyword>
<keyword id="KW-1015">Disulfide bond</keyword>
<keyword id="KW-0325">Glycoprotein</keyword>
<keyword id="KW-0336">GPI-anchor</keyword>
<keyword id="KW-0393">Immunoglobulin domain</keyword>
<keyword id="KW-0449">Lipoprotein</keyword>
<keyword id="KW-0472">Membrane</keyword>
<keyword id="KW-1185">Reference proteome</keyword>
<keyword id="KW-0677">Repeat</keyword>
<keyword id="KW-0732">Signal</keyword>
<accession>Q98919</accession>
<feature type="signal peptide" evidence="2">
    <location>
        <begin position="1"/>
        <end position="28"/>
    </location>
</feature>
<feature type="chain" id="PRO_0000015100" description="Limbic system-associated membrane protein">
    <location>
        <begin position="29"/>
        <end position="315"/>
    </location>
</feature>
<feature type="propeptide" id="PRO_0000015101" description="Removed in mature form" evidence="2">
    <location>
        <begin position="316"/>
        <end position="338"/>
    </location>
</feature>
<feature type="domain" description="Ig-like C2-type 1">
    <location>
        <begin position="29"/>
        <end position="122"/>
    </location>
</feature>
<feature type="domain" description="Ig-like C2-type 2">
    <location>
        <begin position="132"/>
        <end position="214"/>
    </location>
</feature>
<feature type="domain" description="Ig-like C2-type 3">
    <location>
        <begin position="219"/>
        <end position="306"/>
    </location>
</feature>
<feature type="lipid moiety-binding region" description="GPI-anchor amidated asparagine" evidence="2">
    <location>
        <position position="315"/>
    </location>
</feature>
<feature type="glycosylation site" description="N-linked (GlcNAc...) asparagine" evidence="2">
    <location>
        <position position="40"/>
    </location>
</feature>
<feature type="glycosylation site" description="N-linked (GlcNAc...) asparagine" evidence="2">
    <location>
        <position position="66"/>
    </location>
</feature>
<feature type="glycosylation site" description="N-linked (GlcNAc...) asparagine" evidence="2">
    <location>
        <position position="136"/>
    </location>
</feature>
<feature type="glycosylation site" description="N-linked (GlcNAc...) asparagine" evidence="2">
    <location>
        <position position="148"/>
    </location>
</feature>
<feature type="glycosylation site" description="N-linked (GlcNAc...) asparagine" evidence="2">
    <location>
        <position position="279"/>
    </location>
</feature>
<feature type="glycosylation site" description="N-linked (GlcNAc...) asparagine" evidence="2">
    <location>
        <position position="287"/>
    </location>
</feature>
<feature type="glycosylation site" description="N-linked (GlcNAc...) asparagine" evidence="2">
    <location>
        <position position="300"/>
    </location>
</feature>
<feature type="glycosylation site" description="N-linked (GlcNAc...) asparagine" evidence="2">
    <location>
        <position position="315"/>
    </location>
</feature>
<feature type="disulfide bond" evidence="3">
    <location>
        <begin position="53"/>
        <end position="111"/>
    </location>
</feature>
<feature type="disulfide bond" evidence="3">
    <location>
        <begin position="153"/>
        <end position="197"/>
    </location>
</feature>
<feature type="disulfide bond" evidence="3">
    <location>
        <begin position="239"/>
        <end position="290"/>
    </location>
</feature>
<organism>
    <name type="scientific">Gallus gallus</name>
    <name type="common">Chicken</name>
    <dbReference type="NCBI Taxonomy" id="9031"/>
    <lineage>
        <taxon>Eukaryota</taxon>
        <taxon>Metazoa</taxon>
        <taxon>Chordata</taxon>
        <taxon>Craniata</taxon>
        <taxon>Vertebrata</taxon>
        <taxon>Euteleostomi</taxon>
        <taxon>Archelosauria</taxon>
        <taxon>Archosauria</taxon>
        <taxon>Dinosauria</taxon>
        <taxon>Saurischia</taxon>
        <taxon>Theropoda</taxon>
        <taxon>Coelurosauria</taxon>
        <taxon>Aves</taxon>
        <taxon>Neognathae</taxon>
        <taxon>Galloanserae</taxon>
        <taxon>Galliformes</taxon>
        <taxon>Phasianidae</taxon>
        <taxon>Phasianinae</taxon>
        <taxon>Gallus</taxon>
    </lineage>
</organism>
<protein>
    <recommendedName>
        <fullName>Limbic system-associated membrane protein</fullName>
    </recommendedName>
    <alternativeName>
        <fullName>CHLAMP G19-isoform</fullName>
    </alternativeName>
    <alternativeName>
        <fullName>E19S</fullName>
    </alternativeName>
</protein>
<sequence>MVARAQPDRKQLPLVLLRLLCLLPTGLPVRSVDFTRGTDNITVRQGDTAILRCFVEDRSSKVAWLNRSGIIFAGEDKWSLDPRVELEKRSPLEYSLRIQKVDVYDEGSYTCSVQTQHHPKTSQVYLIVQVPPKISNISSDITVNEGSNVTLVCMANGRPEPVITWRHLTPTGKEFEGEEEYLEILGITREQSGKYECKAANEVASADVKQVRVTVNYPPTITESKSNEAATGRQALLRCEASAVPTPDFEWYRDDTRINSANGLEIKSTGSQSLLMVANVTEEHYGNYTCVAANKLGVTNASLYLYRPGTGRVDNGSVSLAVPLWLLAASLLCLLSKC</sequence>
<comment type="function">
    <text evidence="1">Mediates selective neuronal growth and axon targeting. Probably serves as a recognition molecule for the formation of limbic connections (By similarity).</text>
</comment>
<comment type="subcellular location">
    <subcellularLocation>
        <location evidence="1">Cell membrane</location>
        <topology evidence="1">Lipid-anchor</topology>
        <topology evidence="1">GPI-anchor</topology>
    </subcellularLocation>
</comment>
<comment type="similarity">
    <text evidence="4">Belongs to the immunoglobulin superfamily. IgLON family.</text>
</comment>